<organism>
    <name type="scientific">Xenopus tropicalis</name>
    <name type="common">Western clawed frog</name>
    <name type="synonym">Silurana tropicalis</name>
    <dbReference type="NCBI Taxonomy" id="8364"/>
    <lineage>
        <taxon>Eukaryota</taxon>
        <taxon>Metazoa</taxon>
        <taxon>Chordata</taxon>
        <taxon>Craniata</taxon>
        <taxon>Vertebrata</taxon>
        <taxon>Euteleostomi</taxon>
        <taxon>Amphibia</taxon>
        <taxon>Batrachia</taxon>
        <taxon>Anura</taxon>
        <taxon>Pipoidea</taxon>
        <taxon>Pipidae</taxon>
        <taxon>Xenopodinae</taxon>
        <taxon>Xenopus</taxon>
        <taxon>Silurana</taxon>
    </lineage>
</organism>
<accession>Q5XGG5</accession>
<evidence type="ECO:0000250" key="1">
    <source>
        <dbReference type="UniProtKB" id="P41002"/>
    </source>
</evidence>
<evidence type="ECO:0000255" key="2"/>
<evidence type="ECO:0000255" key="3">
    <source>
        <dbReference type="PROSITE-ProRule" id="PRU00080"/>
    </source>
</evidence>
<evidence type="ECO:0000256" key="4">
    <source>
        <dbReference type="SAM" id="MobiDB-lite"/>
    </source>
</evidence>
<evidence type="ECO:0000305" key="5"/>
<keyword id="KW-0131">Cell cycle</keyword>
<keyword id="KW-0132">Cell division</keyword>
<keyword id="KW-0195">Cyclin</keyword>
<keyword id="KW-0963">Cytoplasm</keyword>
<keyword id="KW-0206">Cytoskeleton</keyword>
<keyword id="KW-0498">Mitosis</keyword>
<keyword id="KW-0539">Nucleus</keyword>
<keyword id="KW-1185">Reference proteome</keyword>
<keyword id="KW-0833">Ubl conjugation pathway</keyword>
<reference key="1">
    <citation type="submission" date="2004-10" db="EMBL/GenBank/DDBJ databases">
        <authorList>
            <consortium name="NIH - Xenopus Gene Collection (XGC) project"/>
        </authorList>
    </citation>
    <scope>NUCLEOTIDE SEQUENCE [LARGE SCALE MRNA]</scope>
    <source>
        <tissue>Embryo</tissue>
    </source>
</reference>
<dbReference type="EMBL" id="BC084474">
    <property type="protein sequence ID" value="AAH84474.1"/>
    <property type="molecule type" value="mRNA"/>
</dbReference>
<dbReference type="RefSeq" id="NP_001011083.1">
    <property type="nucleotide sequence ID" value="NM_001011083.1"/>
</dbReference>
<dbReference type="SMR" id="Q5XGG5"/>
<dbReference type="FunCoup" id="Q5XGG5">
    <property type="interactions" value="578"/>
</dbReference>
<dbReference type="STRING" id="8364.ENSXETP00000039752"/>
<dbReference type="PaxDb" id="8364-ENSXETP00000027235"/>
<dbReference type="DNASU" id="496496"/>
<dbReference type="GeneID" id="496496"/>
<dbReference type="KEGG" id="xtr:496496"/>
<dbReference type="AGR" id="Xenbase:XB-GENE-963729"/>
<dbReference type="CTD" id="899"/>
<dbReference type="Xenbase" id="XB-GENE-963729">
    <property type="gene designation" value="ccnf"/>
</dbReference>
<dbReference type="eggNOG" id="KOG0654">
    <property type="taxonomic scope" value="Eukaryota"/>
</dbReference>
<dbReference type="HOGENOM" id="CLU_020348_0_0_1"/>
<dbReference type="InParanoid" id="Q5XGG5"/>
<dbReference type="OrthoDB" id="5590282at2759"/>
<dbReference type="TreeFam" id="TF101006"/>
<dbReference type="Reactome" id="R-XTR-8951664">
    <property type="pathway name" value="Neddylation"/>
</dbReference>
<dbReference type="Reactome" id="R-XTR-983168">
    <property type="pathway name" value="Antigen processing: Ubiquitination &amp; Proteasome degradation"/>
</dbReference>
<dbReference type="Proteomes" id="UP000008143">
    <property type="component" value="Chromosome 9"/>
</dbReference>
<dbReference type="Bgee" id="ENSXETG00000012459">
    <property type="expression patterns" value="Expressed in gastrula and 14 other cell types or tissues"/>
</dbReference>
<dbReference type="ExpressionAtlas" id="Q5XGG5">
    <property type="expression patterns" value="baseline and differential"/>
</dbReference>
<dbReference type="GO" id="GO:0005814">
    <property type="term" value="C:centriole"/>
    <property type="evidence" value="ECO:0000250"/>
    <property type="project" value="UniProtKB"/>
</dbReference>
<dbReference type="GO" id="GO:0005634">
    <property type="term" value="C:nucleus"/>
    <property type="evidence" value="ECO:0000250"/>
    <property type="project" value="UniProtKB"/>
</dbReference>
<dbReference type="GO" id="GO:0048471">
    <property type="term" value="C:perinuclear region of cytoplasm"/>
    <property type="evidence" value="ECO:0007669"/>
    <property type="project" value="UniProtKB-SubCell"/>
</dbReference>
<dbReference type="GO" id="GO:0019005">
    <property type="term" value="C:SCF ubiquitin ligase complex"/>
    <property type="evidence" value="ECO:0000250"/>
    <property type="project" value="UniProtKB"/>
</dbReference>
<dbReference type="GO" id="GO:0051301">
    <property type="term" value="P:cell division"/>
    <property type="evidence" value="ECO:0007669"/>
    <property type="project" value="UniProtKB-KW"/>
</dbReference>
<dbReference type="GO" id="GO:0010826">
    <property type="term" value="P:negative regulation of centrosome duplication"/>
    <property type="evidence" value="ECO:0000250"/>
    <property type="project" value="UniProtKB"/>
</dbReference>
<dbReference type="GO" id="GO:0016567">
    <property type="term" value="P:protein ubiquitination"/>
    <property type="evidence" value="ECO:0000250"/>
    <property type="project" value="UniProtKB"/>
</dbReference>
<dbReference type="GO" id="GO:0031146">
    <property type="term" value="P:SCF-dependent proteasomal ubiquitin-dependent protein catabolic process"/>
    <property type="evidence" value="ECO:0000250"/>
    <property type="project" value="UniProtKB"/>
</dbReference>
<dbReference type="CDD" id="cd20521">
    <property type="entry name" value="CYCLIN_CCNF_rpt1"/>
    <property type="match status" value="1"/>
</dbReference>
<dbReference type="CDD" id="cd20522">
    <property type="entry name" value="CYCLIN_CCNF_rpt2"/>
    <property type="match status" value="1"/>
</dbReference>
<dbReference type="CDD" id="cd22082">
    <property type="entry name" value="F-box_FBXO1"/>
    <property type="match status" value="1"/>
</dbReference>
<dbReference type="FunFam" id="1.10.472.10:FF:000038">
    <property type="entry name" value="Cyclin F"/>
    <property type="match status" value="1"/>
</dbReference>
<dbReference type="FunFam" id="1.10.472.10:FF:000055">
    <property type="entry name" value="Cyclin F"/>
    <property type="match status" value="1"/>
</dbReference>
<dbReference type="Gene3D" id="1.10.472.10">
    <property type="entry name" value="Cyclin-like"/>
    <property type="match status" value="2"/>
</dbReference>
<dbReference type="InterPro" id="IPR039361">
    <property type="entry name" value="Cyclin"/>
</dbReference>
<dbReference type="InterPro" id="IPR013763">
    <property type="entry name" value="Cyclin-like_dom"/>
</dbReference>
<dbReference type="InterPro" id="IPR036915">
    <property type="entry name" value="Cyclin-like_sf"/>
</dbReference>
<dbReference type="InterPro" id="IPR004367">
    <property type="entry name" value="Cyclin_C-dom"/>
</dbReference>
<dbReference type="InterPro" id="IPR006671">
    <property type="entry name" value="Cyclin_N"/>
</dbReference>
<dbReference type="InterPro" id="IPR048258">
    <property type="entry name" value="Cyclins_cyclin-box"/>
</dbReference>
<dbReference type="InterPro" id="IPR036047">
    <property type="entry name" value="F-box-like_dom_sf"/>
</dbReference>
<dbReference type="InterPro" id="IPR001810">
    <property type="entry name" value="F-box_dom"/>
</dbReference>
<dbReference type="PANTHER" id="PTHR10177">
    <property type="entry name" value="CYCLINS"/>
    <property type="match status" value="1"/>
</dbReference>
<dbReference type="Pfam" id="PF02984">
    <property type="entry name" value="Cyclin_C"/>
    <property type="match status" value="1"/>
</dbReference>
<dbReference type="Pfam" id="PF00134">
    <property type="entry name" value="Cyclin_N"/>
    <property type="match status" value="1"/>
</dbReference>
<dbReference type="Pfam" id="PF00646">
    <property type="entry name" value="F-box"/>
    <property type="match status" value="1"/>
</dbReference>
<dbReference type="SMART" id="SM00385">
    <property type="entry name" value="CYCLIN"/>
    <property type="match status" value="2"/>
</dbReference>
<dbReference type="SMART" id="SM01332">
    <property type="entry name" value="Cyclin_C"/>
    <property type="match status" value="1"/>
</dbReference>
<dbReference type="SMART" id="SM00256">
    <property type="entry name" value="FBOX"/>
    <property type="match status" value="1"/>
</dbReference>
<dbReference type="SUPFAM" id="SSF47954">
    <property type="entry name" value="Cyclin-like"/>
    <property type="match status" value="2"/>
</dbReference>
<dbReference type="SUPFAM" id="SSF81383">
    <property type="entry name" value="F-box domain"/>
    <property type="match status" value="1"/>
</dbReference>
<dbReference type="PROSITE" id="PS00292">
    <property type="entry name" value="CYCLINS"/>
    <property type="match status" value="1"/>
</dbReference>
<dbReference type="PROSITE" id="PS50181">
    <property type="entry name" value="FBOX"/>
    <property type="match status" value="1"/>
</dbReference>
<comment type="function">
    <text evidence="1">Substrate recognition component of the SCF(CCNF) E3 ubiquitin-protein ligase complex which mediates the ubiquitination and subsequent proteasomal degradation of target proteins (By similarity). The SCF(CCNF) E3 ubiquitin-protein ligase complex is an integral component of the ubiquitin proteasome system (UPS) and links proteasome degradation to the cell cycle (By similarity). Mediates the substrate recognition and the proteasomal degradation of various target proteins during G2 phase involved in the regulation of cell cycle progression and in the maintenance of genome stability (By similarity).</text>
</comment>
<comment type="subunit">
    <text evidence="1">Component of the SCF(CCNF) complex.</text>
</comment>
<comment type="subcellular location">
    <subcellularLocation>
        <location evidence="1">Nucleus</location>
    </subcellularLocation>
    <subcellularLocation>
        <location evidence="1">Cytoplasm</location>
        <location evidence="1">Perinuclear region</location>
    </subcellularLocation>
    <subcellularLocation>
        <location evidence="1">Cytoplasm</location>
        <location evidence="1">Cytoskeleton</location>
        <location evidence="1">Microtubule organizing center</location>
        <location evidence="1">Centrosome</location>
        <location evidence="1">Centriole</location>
    </subcellularLocation>
    <text evidence="1">Localization in the centrosome is rare in S phase cells and increases in G2 cells, Localizes on both the mother and daughter centrioles. Localizes to the nucleus in G2 phase.</text>
</comment>
<comment type="domain">
    <text evidence="1">The nuclear localization signals mediate the localization to the nucleus.</text>
</comment>
<comment type="domain">
    <text evidence="1">The D box motifs (amino acid sequence RxxL) are involved in substrate binding, and may be ubiquitinated.</text>
</comment>
<comment type="similarity">
    <text evidence="5">Belongs to the cyclin family. Cyclin AB subfamily.</text>
</comment>
<protein>
    <recommendedName>
        <fullName>Cyclin-F</fullName>
    </recommendedName>
</protein>
<name>CCNF_XENTR</name>
<proteinExistence type="evidence at transcript level"/>
<gene>
    <name type="primary">ccnf</name>
</gene>
<feature type="chain" id="PRO_0000398638" description="Cyclin-F">
    <location>
        <begin position="1"/>
        <end position="763"/>
    </location>
</feature>
<feature type="domain" description="F-box" evidence="3">
    <location>
        <begin position="28"/>
        <end position="75"/>
    </location>
</feature>
<feature type="domain" description="Cyclin N-terminal" evidence="2">
    <location>
        <begin position="299"/>
        <end position="411"/>
    </location>
</feature>
<feature type="region of interest" description="Disordered" evidence="4">
    <location>
        <begin position="574"/>
        <end position="600"/>
    </location>
</feature>
<feature type="region of interest" description="PEST">
    <location>
        <begin position="589"/>
        <end position="747"/>
    </location>
</feature>
<feature type="region of interest" description="Disordered" evidence="4">
    <location>
        <begin position="677"/>
        <end position="763"/>
    </location>
</feature>
<feature type="short sequence motif" description="Nuclear localization signal 1" evidence="1">
    <location>
        <begin position="19"/>
        <end position="27"/>
    </location>
</feature>
<feature type="short sequence motif" description="D box 1" evidence="1">
    <location>
        <begin position="316"/>
        <end position="319"/>
    </location>
</feature>
<feature type="short sequence motif" description="D box 2" evidence="1">
    <location>
        <begin position="355"/>
        <end position="358"/>
    </location>
</feature>
<feature type="short sequence motif" description="Nuclear localization signal 2" evidence="1">
    <location>
        <begin position="575"/>
        <end position="581"/>
    </location>
</feature>
<feature type="compositionally biased region" description="Basic and acidic residues" evidence="4">
    <location>
        <begin position="580"/>
        <end position="590"/>
    </location>
</feature>
<feature type="compositionally biased region" description="Low complexity" evidence="4">
    <location>
        <begin position="692"/>
        <end position="710"/>
    </location>
</feature>
<feature type="compositionally biased region" description="Basic residues" evidence="4">
    <location>
        <begin position="741"/>
        <end position="751"/>
    </location>
</feature>
<sequence>MKGGALHCRCSKCFAAPPKRRVKRRPRVLTLLSLPEDVLLYVLECLPAVDILSMREVHPHLRSLVDSHSSVWARASFQDVWPSPENLNLFERAAECGNFEACVKLGIAYLYNEGLSLSDDGRAEVNGLKASRFFSLTERLNSGADPFVWLFIRPPWSSSGSCCKAVVFDSLKEECGTVTSEEGATGALKGSIQYCLAKVLSLFEDDDKKREALGMLESSASHGCLHSSYLLWETKQKTALSDPGRYLQSFRQLRDYAARGCWDAQISLAKACGHKNQLSQEQRSASELVNQVFQSSLPINKTSIFTTQKGMNDTMRYILIDWLVEVATMKDFSSLCLHMTVGLVDRYLKLRSVPRAKLQLVGIACMVICTRFISKEILTIREAVWLTDNTYKYEDLVRMMGEIISALEGKIRMPTVVDYKDVLSHLIPLDRSTLHLCSYISELSLLYTELSTYSPAQLAAGALLLARILHKQARPWPAQLAETTGFTLEHLTPCVVLLHKKCFHDDAPKDYRQVSLTAVKQRFQDDLYDQISKEKVMDHSHLCELLGVPCRDSESPASCPNAADFHQFLCSPSGSKTKRRREDSIQEDRGSFVTTPTAELSNQEEDLLGDFLDWSLETSCSGYEGDRESEGEREGEVTAPSGVLDLSLLITEHQQCQDTTSDDDSLVPLHPIPLLSKLENGTHSTEGCAEKSSGYSSVSSGGSPTSSSSPPGLPFTPTPGLNHSKLMPIPFPQPCSPLFKASRRQVKRKNQAQHSEDNLSDEL</sequence>